<name>PB2_I73A5</name>
<accession>Q1PUC9</accession>
<organism>
    <name type="scientific">Influenza A virus (strain A/Port Chalmers/1/1973 H3N2)</name>
    <dbReference type="NCBI Taxonomy" id="385624"/>
    <lineage>
        <taxon>Viruses</taxon>
        <taxon>Riboviria</taxon>
        <taxon>Orthornavirae</taxon>
        <taxon>Negarnaviricota</taxon>
        <taxon>Polyploviricotina</taxon>
        <taxon>Insthoviricetes</taxon>
        <taxon>Articulavirales</taxon>
        <taxon>Orthomyxoviridae</taxon>
        <taxon>Alphainfluenzavirus</taxon>
        <taxon>Alphainfluenzavirus influenzae</taxon>
        <taxon>Influenza A virus</taxon>
    </lineage>
</organism>
<evidence type="ECO:0000255" key="1">
    <source>
        <dbReference type="HAMAP-Rule" id="MF_04062"/>
    </source>
</evidence>
<sequence>MERIKELRNLMSQSRTREILTKTTVDHMAIIKKYTSGRQEKNPSLRMKWMMAMKYPITADKRITEMVPERNEQGQTLWSKMSDAGSDRVMVSPLAVTWWNRNGPVTSTVHYPKVYKTYFDKVERLKHGTFGPVHFRNQVKIRRRVDINPGHADLSAKEAQDVIMEVVFPNEVGARILTSESQLTITKEKKEELQDCKISPLMVAYMLERELVRKTRFLPVAGGTSSVYIEVLHLTQGTCWEQMYTPGGEVKNDDVDQSLIIAARNIVRRAAVSADPLASLLEMCHSTQIGGTRMVDILRQNPTEEQAVDICKAAMGLRISSSFSFGGFTFKRTSGSSIKREEEVLTGNLQTLKIRVHEGYEEFTMVGKRATAILRKATRRLVQLIVSGRDEQSIAEAIIVAMVFSQEDCMIKAVRGDLNFVNRANQRLNPMHQLLRHFQKDAKVLFQNWGIEHIDNVMGMVGVLPDMTPSTEMSMRGIRVSKMGVDEYSSTERVVVSIDRFLRVRDQRGNVLLSPEEVSETQGTERLTITYSSSMMWEINGPESVLVNTYQWIIRNWETVKIQWSQNPTMLYNKMEFEPFQSLVPKAIRGQYSGFVRTLFQQMRDVLGTFDTTQIIKLLPFAAAPPKQSRMQFSSLTVNVRGSGMRILVRGNSPVFNYNKTTKRLTILGKDAGTLIEDPDESTSGVESAVLRGFLILGKEERRYGPALSINELSNLAKGEKANVLIGQGDVVLVMKRKRDSSILTDSQTATKRIRMAIN</sequence>
<organismHost>
    <name type="scientific">Aves</name>
    <dbReference type="NCBI Taxonomy" id="8782"/>
</organismHost>
<organismHost>
    <name type="scientific">Cetacea</name>
    <name type="common">whales</name>
    <dbReference type="NCBI Taxonomy" id="9721"/>
</organismHost>
<organismHost>
    <name type="scientific">Homo sapiens</name>
    <name type="common">Human</name>
    <dbReference type="NCBI Taxonomy" id="9606"/>
</organismHost>
<organismHost>
    <name type="scientific">Phocidae</name>
    <name type="common">true seals</name>
    <dbReference type="NCBI Taxonomy" id="9709"/>
</organismHost>
<organismHost>
    <name type="scientific">Sus scrofa</name>
    <name type="common">Pig</name>
    <dbReference type="NCBI Taxonomy" id="9823"/>
</organismHost>
<reference key="1">
    <citation type="submission" date="2006-04" db="EMBL/GenBank/DDBJ databases">
        <title>The NIAID influenza genome sequencing project.</title>
        <authorList>
            <person name="Spiro D."/>
            <person name="Ghedin E."/>
            <person name="Sengamalay N."/>
            <person name="Halpin R."/>
            <person name="Boyne A."/>
            <person name="Zaborsky J."/>
            <person name="Feldblyum T."/>
            <person name="Subbu V."/>
            <person name="Sparenborg J."/>
            <person name="Shumway M."/>
            <person name="Sitz J."/>
            <person name="Katzel D."/>
            <person name="Koo H."/>
            <person name="Salzberg S.L."/>
            <person name="Griesemer S."/>
            <person name="St George K."/>
            <person name="Bennett R."/>
            <person name="Taylor J."/>
            <person name="Bennink J.R."/>
            <person name="Yewdell J.W."/>
            <person name="Bao Y."/>
            <person name="Bolotov P."/>
            <person name="Dernovoy D."/>
            <person name="Kiryutin B."/>
            <person name="Lipman D.J."/>
            <person name="Tatusova T."/>
        </authorList>
    </citation>
    <scope>NUCLEOTIDE SEQUENCE [GENOMIC RNA]</scope>
</reference>
<comment type="function">
    <text evidence="1">Plays an essential role in transcription initiation and cap-stealing mechanism, in which cellular capped pre-mRNAs are used to generate primers for viral transcription. Recognizes and binds the 7-methylguanosine-containing cap of the target pre-RNA which is subsequently cleaved after 10-13 nucleotides by the viral protein PA. Plays a role in the initiation of the viral genome replication and modulates the activity of the ribonucleoprotein (RNP) complex. In addition, participates in the inhibition of type I interferon induction through interaction with and inhibition of the host mitochondrial antiviral signaling protein MAVS.</text>
</comment>
<comment type="subunit">
    <text evidence="1">Influenza RNA polymerase is composed of three subunits: PB1, PB2 and PA. Interacts (via N-terminus) with PB1 (via C-terminus). Interacts with nucleoprotein NP (via N-terminus). Interacts (via N-terminus) with host MAVS (via N-terminus); this interaction inhibits host innate immune response.</text>
</comment>
<comment type="subcellular location">
    <subcellularLocation>
        <location evidence="1">Virion</location>
    </subcellularLocation>
    <subcellularLocation>
        <location evidence="1">Host nucleus</location>
    </subcellularLocation>
    <subcellularLocation>
        <location evidence="1">Host mitochondrion</location>
    </subcellularLocation>
</comment>
<comment type="similarity">
    <text evidence="1">Belongs to the influenza viruses PB2 family.</text>
</comment>
<feature type="chain" id="PRO_0000279644" description="Polymerase basic protein 2">
    <location>
        <begin position="1"/>
        <end position="759"/>
    </location>
</feature>
<feature type="short sequence motif" description="Nuclear localization signal" evidence="1">
    <location>
        <begin position="736"/>
        <end position="739"/>
    </location>
</feature>
<feature type="site" description="Mammalian adaptation" evidence="1">
    <location>
        <position position="627"/>
    </location>
</feature>
<keyword id="KW-1157">Cap snatching</keyword>
<keyword id="KW-1262">Eukaryotic host gene expression shutoff by virus</keyword>
<keyword id="KW-1191">Eukaryotic host transcription shutoff by virus</keyword>
<keyword id="KW-1190">Host gene expression shutoff by virus</keyword>
<keyword id="KW-1045">Host mitochondrion</keyword>
<keyword id="KW-1048">Host nucleus</keyword>
<keyword id="KW-0945">Host-virus interaction</keyword>
<keyword id="KW-1090">Inhibition of host innate immune response by virus</keyword>
<keyword id="KW-1097">Inhibition of host MAVS by virus</keyword>
<keyword id="KW-1113">Inhibition of host RLR pathway by virus</keyword>
<keyword id="KW-1104">Inhibition of host RNA polymerase II by virus</keyword>
<keyword id="KW-0506">mRNA capping</keyword>
<keyword id="KW-0507">mRNA processing</keyword>
<keyword id="KW-0899">Viral immunoevasion</keyword>
<keyword id="KW-1195">Viral transcription</keyword>
<keyword id="KW-0946">Virion</keyword>
<gene>
    <name evidence="1" type="primary">PB2</name>
</gene>
<dbReference type="EMBL" id="CY009355">
    <property type="protein sequence ID" value="ABE12588.1"/>
    <property type="molecule type" value="Genomic_RNA"/>
</dbReference>
<dbReference type="SMR" id="Q1PUC9"/>
<dbReference type="PRO" id="PR:Q1PUC9"/>
<dbReference type="Proteomes" id="UP000133870">
    <property type="component" value="Genome"/>
</dbReference>
<dbReference type="GO" id="GO:0033650">
    <property type="term" value="C:host cell mitochondrion"/>
    <property type="evidence" value="ECO:0007669"/>
    <property type="project" value="UniProtKB-SubCell"/>
</dbReference>
<dbReference type="GO" id="GO:0042025">
    <property type="term" value="C:host cell nucleus"/>
    <property type="evidence" value="ECO:0007669"/>
    <property type="project" value="UniProtKB-SubCell"/>
</dbReference>
<dbReference type="GO" id="GO:0044423">
    <property type="term" value="C:virion component"/>
    <property type="evidence" value="ECO:0007669"/>
    <property type="project" value="UniProtKB-UniRule"/>
</dbReference>
<dbReference type="GO" id="GO:0003723">
    <property type="term" value="F:RNA binding"/>
    <property type="evidence" value="ECO:0007669"/>
    <property type="project" value="UniProtKB-UniRule"/>
</dbReference>
<dbReference type="GO" id="GO:0003968">
    <property type="term" value="F:RNA-directed RNA polymerase activity"/>
    <property type="evidence" value="ECO:0007669"/>
    <property type="project" value="UniProtKB-UniRule"/>
</dbReference>
<dbReference type="GO" id="GO:0006370">
    <property type="term" value="P:7-methylguanosine mRNA capping"/>
    <property type="evidence" value="ECO:0007669"/>
    <property type="project" value="UniProtKB-UniRule"/>
</dbReference>
<dbReference type="GO" id="GO:0075526">
    <property type="term" value="P:cap snatching"/>
    <property type="evidence" value="ECO:0007669"/>
    <property type="project" value="UniProtKB-UniRule"/>
</dbReference>
<dbReference type="GO" id="GO:0006351">
    <property type="term" value="P:DNA-templated transcription"/>
    <property type="evidence" value="ECO:0007669"/>
    <property type="project" value="UniProtKB-UniRule"/>
</dbReference>
<dbReference type="GO" id="GO:0039545">
    <property type="term" value="P:symbiont-mediated suppression of host cytoplasmic pattern recognition receptor signaling pathway via inhibition of MAVS activity"/>
    <property type="evidence" value="ECO:0007669"/>
    <property type="project" value="UniProtKB-UniRule"/>
</dbReference>
<dbReference type="GO" id="GO:0039657">
    <property type="term" value="P:symbiont-mediated suppression of host gene expression"/>
    <property type="evidence" value="ECO:0007669"/>
    <property type="project" value="UniProtKB-KW"/>
</dbReference>
<dbReference type="GO" id="GO:0039523">
    <property type="term" value="P:symbiont-mediated suppression of host mRNA transcription via inhibition of RNA polymerase II activity"/>
    <property type="evidence" value="ECO:0007669"/>
    <property type="project" value="UniProtKB-UniRule"/>
</dbReference>
<dbReference type="GO" id="GO:0039694">
    <property type="term" value="P:viral RNA genome replication"/>
    <property type="evidence" value="ECO:0007669"/>
    <property type="project" value="InterPro"/>
</dbReference>
<dbReference type="FunFam" id="3.30.30.90:FF:000001">
    <property type="entry name" value="Polymerase basic protein 2"/>
    <property type="match status" value="1"/>
</dbReference>
<dbReference type="Gene3D" id="3.30.30.90">
    <property type="entry name" value="Polymerase Basic Protein 2, C-terminal domain"/>
    <property type="match status" value="1"/>
</dbReference>
<dbReference type="HAMAP" id="MF_04062">
    <property type="entry name" value="INV_PB2"/>
    <property type="match status" value="1"/>
</dbReference>
<dbReference type="InterPro" id="IPR049110">
    <property type="entry name" value="Flu_PB2_2nd"/>
</dbReference>
<dbReference type="InterPro" id="IPR049114">
    <property type="entry name" value="Flu_PB2_6th"/>
</dbReference>
<dbReference type="InterPro" id="IPR049115">
    <property type="entry name" value="Flu_PB2_C"/>
</dbReference>
<dbReference type="InterPro" id="IPR048298">
    <property type="entry name" value="Flu_PB2_CAP-bd"/>
</dbReference>
<dbReference type="InterPro" id="IPR049111">
    <property type="entry name" value="Flu_PB2_middle"/>
</dbReference>
<dbReference type="InterPro" id="IPR049106">
    <property type="entry name" value="Flu_PB2_N"/>
</dbReference>
<dbReference type="InterPro" id="IPR001591">
    <property type="entry name" value="INV_PB2"/>
</dbReference>
<dbReference type="InterPro" id="IPR049113">
    <property type="entry name" value="PB2_helical"/>
</dbReference>
<dbReference type="InterPro" id="IPR037258">
    <property type="entry name" value="PDB2_C"/>
</dbReference>
<dbReference type="Pfam" id="PF20947">
    <property type="entry name" value="Flu_PB2_1st"/>
    <property type="match status" value="1"/>
</dbReference>
<dbReference type="Pfam" id="PF20948">
    <property type="entry name" value="Flu_PB2_2nd"/>
    <property type="match status" value="1"/>
</dbReference>
<dbReference type="Pfam" id="PF20949">
    <property type="entry name" value="Flu_PB2_3rd"/>
    <property type="match status" value="1"/>
</dbReference>
<dbReference type="Pfam" id="PF20950">
    <property type="entry name" value="Flu_PB2_4th"/>
    <property type="match status" value="1"/>
</dbReference>
<dbReference type="Pfam" id="PF00604">
    <property type="entry name" value="Flu_PB2_5th"/>
    <property type="match status" value="1"/>
</dbReference>
<dbReference type="Pfam" id="PF20951">
    <property type="entry name" value="Flu_PB2_6th"/>
    <property type="match status" value="1"/>
</dbReference>
<dbReference type="Pfam" id="PF20952">
    <property type="entry name" value="Flu_PB2_7th"/>
    <property type="match status" value="1"/>
</dbReference>
<dbReference type="SUPFAM" id="SSF160453">
    <property type="entry name" value="PB2 C-terminal domain-like"/>
    <property type="match status" value="1"/>
</dbReference>
<proteinExistence type="inferred from homology"/>
<protein>
    <recommendedName>
        <fullName evidence="1">Polymerase basic protein 2</fullName>
    </recommendedName>
    <alternativeName>
        <fullName evidence="1">RNA-directed RNA polymerase subunit P3</fullName>
    </alternativeName>
</protein>